<evidence type="ECO:0000250" key="1"/>
<evidence type="ECO:0000255" key="2"/>
<evidence type="ECO:0000255" key="3">
    <source>
        <dbReference type="PROSITE-ProRule" id="PRU00691"/>
    </source>
</evidence>
<evidence type="ECO:0000256" key="4">
    <source>
        <dbReference type="SAM" id="MobiDB-lite"/>
    </source>
</evidence>
<evidence type="ECO:0000305" key="5"/>
<accession>Q9XF61</accession>
<reference key="1">
    <citation type="online journal article" date="1999" name="Plant Gene Register">
        <title>DgPDIa, full-length cDNA from symbiotic root nodules of Datisca glomerata with homology to protein disulfide isomerase genes.</title>
        <authorList>
            <person name="Okubara P.A."/>
            <person name="Berry A.M."/>
        </authorList>
        <locator>PGR99-052</locator>
    </citation>
    <scope>NUCLEOTIDE SEQUENCE [MRNA]</scope>
    <source>
        <tissue>Root nodule</tissue>
    </source>
</reference>
<dbReference type="EC" id="5.3.4.1"/>
<dbReference type="EMBL" id="AF131223">
    <property type="protein sequence ID" value="AAD28260.1"/>
    <property type="molecule type" value="mRNA"/>
</dbReference>
<dbReference type="SMR" id="Q9XF61"/>
<dbReference type="GlyCosmos" id="Q9XF61">
    <property type="glycosylation" value="2 sites, No reported glycans"/>
</dbReference>
<dbReference type="GO" id="GO:0005788">
    <property type="term" value="C:endoplasmic reticulum lumen"/>
    <property type="evidence" value="ECO:0007669"/>
    <property type="project" value="UniProtKB-SubCell"/>
</dbReference>
<dbReference type="GO" id="GO:0003756">
    <property type="term" value="F:protein disulfide isomerase activity"/>
    <property type="evidence" value="ECO:0007669"/>
    <property type="project" value="UniProtKB-EC"/>
</dbReference>
<dbReference type="GO" id="GO:0006457">
    <property type="term" value="P:protein folding"/>
    <property type="evidence" value="ECO:0007669"/>
    <property type="project" value="TreeGrafter"/>
</dbReference>
<dbReference type="GO" id="GO:0034976">
    <property type="term" value="P:response to endoplasmic reticulum stress"/>
    <property type="evidence" value="ECO:0007669"/>
    <property type="project" value="TreeGrafter"/>
</dbReference>
<dbReference type="CDD" id="cd02961">
    <property type="entry name" value="PDI_a_family"/>
    <property type="match status" value="1"/>
</dbReference>
<dbReference type="CDD" id="cd02995">
    <property type="entry name" value="PDI_a_PDI_a'_C"/>
    <property type="match status" value="1"/>
</dbReference>
<dbReference type="CDD" id="cd02982">
    <property type="entry name" value="PDI_b'_family"/>
    <property type="match status" value="1"/>
</dbReference>
<dbReference type="CDD" id="cd02981">
    <property type="entry name" value="PDI_b_family"/>
    <property type="match status" value="1"/>
</dbReference>
<dbReference type="FunFam" id="3.40.30.10:FF:000143">
    <property type="entry name" value="Protein disulfide-isomerase"/>
    <property type="match status" value="1"/>
</dbReference>
<dbReference type="FunFam" id="3.40.30.10:FF:000150">
    <property type="entry name" value="Protein disulfide-isomerase"/>
    <property type="match status" value="1"/>
</dbReference>
<dbReference type="FunFam" id="3.40.30.10:FF:000152">
    <property type="entry name" value="Protein disulfide-isomerase"/>
    <property type="match status" value="1"/>
</dbReference>
<dbReference type="FunFam" id="3.40.30.10:FF:000184">
    <property type="entry name" value="Protein disulfide-isomerase"/>
    <property type="match status" value="1"/>
</dbReference>
<dbReference type="Gene3D" id="3.40.30.10">
    <property type="entry name" value="Glutaredoxin"/>
    <property type="match status" value="4"/>
</dbReference>
<dbReference type="InterPro" id="IPR005788">
    <property type="entry name" value="PDI_thioredoxin-like_dom"/>
</dbReference>
<dbReference type="InterPro" id="IPR005792">
    <property type="entry name" value="Prot_disulphide_isomerase"/>
</dbReference>
<dbReference type="InterPro" id="IPR036249">
    <property type="entry name" value="Thioredoxin-like_sf"/>
</dbReference>
<dbReference type="InterPro" id="IPR017937">
    <property type="entry name" value="Thioredoxin_CS"/>
</dbReference>
<dbReference type="InterPro" id="IPR013766">
    <property type="entry name" value="Thioredoxin_domain"/>
</dbReference>
<dbReference type="NCBIfam" id="TIGR01130">
    <property type="entry name" value="ER_PDI_fam"/>
    <property type="match status" value="1"/>
</dbReference>
<dbReference type="NCBIfam" id="TIGR01126">
    <property type="entry name" value="pdi_dom"/>
    <property type="match status" value="2"/>
</dbReference>
<dbReference type="PANTHER" id="PTHR18929">
    <property type="entry name" value="PROTEIN DISULFIDE ISOMERASE"/>
    <property type="match status" value="1"/>
</dbReference>
<dbReference type="PANTHER" id="PTHR18929:SF132">
    <property type="entry name" value="PROTEIN DISULFIDE-ISOMERASE A3"/>
    <property type="match status" value="1"/>
</dbReference>
<dbReference type="Pfam" id="PF00085">
    <property type="entry name" value="Thioredoxin"/>
    <property type="match status" value="2"/>
</dbReference>
<dbReference type="Pfam" id="PF13848">
    <property type="entry name" value="Thioredoxin_6"/>
    <property type="match status" value="1"/>
</dbReference>
<dbReference type="PRINTS" id="PR00421">
    <property type="entry name" value="THIOREDOXIN"/>
</dbReference>
<dbReference type="SUPFAM" id="SSF52833">
    <property type="entry name" value="Thioredoxin-like"/>
    <property type="match status" value="4"/>
</dbReference>
<dbReference type="PROSITE" id="PS00194">
    <property type="entry name" value="THIOREDOXIN_1"/>
    <property type="match status" value="2"/>
</dbReference>
<dbReference type="PROSITE" id="PS51352">
    <property type="entry name" value="THIOREDOXIN_2"/>
    <property type="match status" value="2"/>
</dbReference>
<protein>
    <recommendedName>
        <fullName>Protein disulfide-isomerase</fullName>
        <shortName>PDI</shortName>
        <ecNumber>5.3.4.1</ecNumber>
    </recommendedName>
</protein>
<organism>
    <name type="scientific">Datisca glomerata</name>
    <name type="common">Durango root</name>
    <dbReference type="NCBI Taxonomy" id="34297"/>
    <lineage>
        <taxon>Eukaryota</taxon>
        <taxon>Viridiplantae</taxon>
        <taxon>Streptophyta</taxon>
        <taxon>Embryophyta</taxon>
        <taxon>Tracheophyta</taxon>
        <taxon>Spermatophyta</taxon>
        <taxon>Magnoliopsida</taxon>
        <taxon>eudicotyledons</taxon>
        <taxon>Gunneridae</taxon>
        <taxon>Pentapetalae</taxon>
        <taxon>rosids</taxon>
        <taxon>fabids</taxon>
        <taxon>Cucurbitales</taxon>
        <taxon>Datiscaceae</taxon>
        <taxon>Datisca</taxon>
    </lineage>
</organism>
<sequence length="507" mass="57089">MASMVSFCFLLLFLAFFASSFNEIYAEESESKEFVLTLDKSNFFDTVSKHNFIVVEFYAPWCGHCKKLAPEYEKAASILSSHDPPVILAKVDANEEANKELASEFEVRGFPTIKILRNGGKIVQEYKGPRDADGIVDYLKKQSGPPSAEIKSIEDATNLVSEKKIVVVGIFPKFSGEEFENFSALAEKLRSDYEFGHTLDAKLLPRGESSVSGPVVRLFKPFDELFVDFQDFDVNALEKLVEESSVPTVTIFDKDPSNHPFVVKFFNNANAKAMLFLNFTSEVVESFRSIYREVAEKNKGEGISFLIGDTESSQGAFQYFGLRDDQVPLIVIQNNDGTKYLKPNLEPDHIASWVKEYKDCKLSPYRKSEPIPEHNNEPVKVVVADSLDEIVFKSGKNVLLEFYAPWCGHCKQLAPILDEVAVSFENDPDVLIAKLDATANDYPTNTFDVKGYPTLYFKSASGELLQYDGGRTKEDFIEFIEKNREKSSKKESIVKDDQTDSETKAEL</sequence>
<gene>
    <name type="primary">PDI</name>
</gene>
<proteinExistence type="evidence at transcript level"/>
<comment type="function">
    <text evidence="1">Participates in the folding of proteins containing disulfide bonds, may be involved in glycosylation, prolyl hydroxylation and triglyceride transfer.</text>
</comment>
<comment type="catalytic activity">
    <reaction>
        <text>Catalyzes the rearrangement of -S-S- bonds in proteins.</text>
        <dbReference type="EC" id="5.3.4.1"/>
    </reaction>
</comment>
<comment type="subcellular location">
    <subcellularLocation>
        <location evidence="5">Endoplasmic reticulum lumen</location>
    </subcellularLocation>
</comment>
<comment type="similarity">
    <text evidence="5">Belongs to the protein disulfide isomerase family.</text>
</comment>
<name>PDI_DATGL</name>
<keyword id="KW-1015">Disulfide bond</keyword>
<keyword id="KW-0256">Endoplasmic reticulum</keyword>
<keyword id="KW-0325">Glycoprotein</keyword>
<keyword id="KW-0413">Isomerase</keyword>
<keyword id="KW-0676">Redox-active center</keyword>
<keyword id="KW-0677">Repeat</keyword>
<keyword id="KW-0732">Signal</keyword>
<feature type="signal peptide" evidence="2">
    <location>
        <begin position="1"/>
        <end position="20"/>
    </location>
</feature>
<feature type="chain" id="PRO_0000034207" description="Protein disulfide-isomerase">
    <location>
        <begin position="21"/>
        <end position="507"/>
    </location>
</feature>
<feature type="domain" description="Thioredoxin 1" evidence="3">
    <location>
        <begin position="21"/>
        <end position="144"/>
    </location>
</feature>
<feature type="domain" description="Thioredoxin 2" evidence="3">
    <location>
        <begin position="365"/>
        <end position="485"/>
    </location>
</feature>
<feature type="region of interest" description="Disordered" evidence="4">
    <location>
        <begin position="484"/>
        <end position="507"/>
    </location>
</feature>
<feature type="short sequence motif" description="Prevents secretion from ER" evidence="1">
    <location>
        <begin position="504"/>
        <end position="507"/>
    </location>
</feature>
<feature type="active site" description="Nucleophile" evidence="1">
    <location>
        <position position="62"/>
    </location>
</feature>
<feature type="active site" description="Nucleophile" evidence="1">
    <location>
        <position position="65"/>
    </location>
</feature>
<feature type="active site" description="Nucleophile" evidence="1">
    <location>
        <position position="407"/>
    </location>
</feature>
<feature type="active site" description="Nucleophile" evidence="1">
    <location>
        <position position="410"/>
    </location>
</feature>
<feature type="site" description="Contributes to redox potential value" evidence="1">
    <location>
        <position position="63"/>
    </location>
</feature>
<feature type="site" description="Contributes to redox potential value" evidence="1">
    <location>
        <position position="64"/>
    </location>
</feature>
<feature type="site" description="Lowers pKa of C-terminal Cys of first active site" evidence="1">
    <location>
        <position position="130"/>
    </location>
</feature>
<feature type="site" description="Contributes to redox potential value" evidence="1">
    <location>
        <position position="408"/>
    </location>
</feature>
<feature type="site" description="Contributes to redox potential value" evidence="1">
    <location>
        <position position="409"/>
    </location>
</feature>
<feature type="site" description="Lowers pKa of C-terminal Cys of second active site" evidence="1">
    <location>
        <position position="471"/>
    </location>
</feature>
<feature type="glycosylation site" description="N-linked (GlcNAc...) asparagine" evidence="2">
    <location>
        <position position="181"/>
    </location>
</feature>
<feature type="glycosylation site" description="N-linked (GlcNAc...) asparagine" evidence="2">
    <location>
        <position position="278"/>
    </location>
</feature>
<feature type="disulfide bond" description="Redox-active" evidence="3">
    <location>
        <begin position="62"/>
        <end position="65"/>
    </location>
</feature>
<feature type="disulfide bond" description="Redox-active" evidence="3">
    <location>
        <begin position="407"/>
        <end position="410"/>
    </location>
</feature>